<dbReference type="EC" id="6.3.5.3" evidence="1"/>
<dbReference type="EC" id="3.5.1.2" evidence="1"/>
<dbReference type="EMBL" id="CP000046">
    <property type="protein sequence ID" value="AAW37957.1"/>
    <property type="molecule type" value="Genomic_DNA"/>
</dbReference>
<dbReference type="RefSeq" id="WP_000666799.1">
    <property type="nucleotide sequence ID" value="NZ_JBGOFO010000002.1"/>
</dbReference>
<dbReference type="SMR" id="Q5HH16"/>
<dbReference type="KEGG" id="sac:SACOL1077"/>
<dbReference type="HOGENOM" id="CLU_001031_3_1_9"/>
<dbReference type="UniPathway" id="UPA00074">
    <property type="reaction ID" value="UER00128"/>
</dbReference>
<dbReference type="Proteomes" id="UP000000530">
    <property type="component" value="Chromosome"/>
</dbReference>
<dbReference type="GO" id="GO:0005737">
    <property type="term" value="C:cytoplasm"/>
    <property type="evidence" value="ECO:0007669"/>
    <property type="project" value="UniProtKB-SubCell"/>
</dbReference>
<dbReference type="GO" id="GO:0005524">
    <property type="term" value="F:ATP binding"/>
    <property type="evidence" value="ECO:0007669"/>
    <property type="project" value="UniProtKB-KW"/>
</dbReference>
<dbReference type="GO" id="GO:0004359">
    <property type="term" value="F:glutaminase activity"/>
    <property type="evidence" value="ECO:0007669"/>
    <property type="project" value="UniProtKB-EC"/>
</dbReference>
<dbReference type="GO" id="GO:0004642">
    <property type="term" value="F:phosphoribosylformylglycinamidine synthase activity"/>
    <property type="evidence" value="ECO:0007669"/>
    <property type="project" value="UniProtKB-UniRule"/>
</dbReference>
<dbReference type="GO" id="GO:0006189">
    <property type="term" value="P:'de novo' IMP biosynthetic process"/>
    <property type="evidence" value="ECO:0007669"/>
    <property type="project" value="UniProtKB-UniRule"/>
</dbReference>
<dbReference type="CDD" id="cd01740">
    <property type="entry name" value="GATase1_FGAR_AT"/>
    <property type="match status" value="1"/>
</dbReference>
<dbReference type="Gene3D" id="3.40.50.880">
    <property type="match status" value="1"/>
</dbReference>
<dbReference type="HAMAP" id="MF_00421">
    <property type="entry name" value="PurQ"/>
    <property type="match status" value="1"/>
</dbReference>
<dbReference type="InterPro" id="IPR029062">
    <property type="entry name" value="Class_I_gatase-like"/>
</dbReference>
<dbReference type="InterPro" id="IPR010075">
    <property type="entry name" value="PRibForGlyAmidine_synth_PurQ"/>
</dbReference>
<dbReference type="NCBIfam" id="TIGR01737">
    <property type="entry name" value="FGAM_synth_I"/>
    <property type="match status" value="1"/>
</dbReference>
<dbReference type="NCBIfam" id="NF002957">
    <property type="entry name" value="PRK03619.1"/>
    <property type="match status" value="1"/>
</dbReference>
<dbReference type="PANTHER" id="PTHR47552">
    <property type="entry name" value="PHOSPHORIBOSYLFORMYLGLYCINAMIDINE SYNTHASE SUBUNIT PURQ"/>
    <property type="match status" value="1"/>
</dbReference>
<dbReference type="PANTHER" id="PTHR47552:SF1">
    <property type="entry name" value="PHOSPHORIBOSYLFORMYLGLYCINAMIDINE SYNTHASE SUBUNIT PURQ"/>
    <property type="match status" value="1"/>
</dbReference>
<dbReference type="Pfam" id="PF13507">
    <property type="entry name" value="GATase_5"/>
    <property type="match status" value="1"/>
</dbReference>
<dbReference type="PIRSF" id="PIRSF001586">
    <property type="entry name" value="FGAM_synth_I"/>
    <property type="match status" value="1"/>
</dbReference>
<dbReference type="SMART" id="SM01211">
    <property type="entry name" value="GATase_5"/>
    <property type="match status" value="1"/>
</dbReference>
<dbReference type="SUPFAM" id="SSF52317">
    <property type="entry name" value="Class I glutamine amidotransferase-like"/>
    <property type="match status" value="1"/>
</dbReference>
<dbReference type="PROSITE" id="PS51273">
    <property type="entry name" value="GATASE_TYPE_1"/>
    <property type="match status" value="1"/>
</dbReference>
<organism>
    <name type="scientific">Staphylococcus aureus (strain COL)</name>
    <dbReference type="NCBI Taxonomy" id="93062"/>
    <lineage>
        <taxon>Bacteria</taxon>
        <taxon>Bacillati</taxon>
        <taxon>Bacillota</taxon>
        <taxon>Bacilli</taxon>
        <taxon>Bacillales</taxon>
        <taxon>Staphylococcaceae</taxon>
        <taxon>Staphylococcus</taxon>
    </lineage>
</organism>
<sequence length="223" mass="24527">MKFAVLVFPGSNCDRDMFNAAIKSGVEAEYVDYRETSLSGFDGVLIPGGFSFGDYLRSGAMASVAPIISEVKRLAAEGKPVLGVCNGFQILTEIGLLPGALLHNDSHLFISRNEELEIVNNQTAFTNLYEQGEKVIYPVAHGEGHYYCTDEIYQQLKANNQIILKYVNNPNGSYDDIAGIVNEKGNVCGMMPHPERALETLLGTDSGVKLFEAMVKSWREQHV</sequence>
<protein>
    <recommendedName>
        <fullName evidence="1">Phosphoribosylformylglycinamidine synthase subunit PurQ</fullName>
        <shortName evidence="1">FGAM synthase</shortName>
        <ecNumber evidence="1">6.3.5.3</ecNumber>
    </recommendedName>
    <alternativeName>
        <fullName evidence="1">Formylglycinamide ribonucleotide amidotransferase subunit I</fullName>
        <shortName evidence="1">FGAR amidotransferase I</shortName>
        <shortName evidence="1">FGAR-AT I</shortName>
    </alternativeName>
    <alternativeName>
        <fullName evidence="1">Glutaminase PurQ</fullName>
        <ecNumber evidence="1">3.5.1.2</ecNumber>
    </alternativeName>
    <alternativeName>
        <fullName evidence="1">Phosphoribosylformylglycinamidine synthase subunit I</fullName>
    </alternativeName>
</protein>
<feature type="chain" id="PRO_0000100583" description="Phosphoribosylformylglycinamidine synthase subunit PurQ">
    <location>
        <begin position="1"/>
        <end position="223"/>
    </location>
</feature>
<feature type="domain" description="Glutamine amidotransferase type-1" evidence="1">
    <location>
        <begin position="3"/>
        <end position="223"/>
    </location>
</feature>
<feature type="active site" description="Nucleophile" evidence="1">
    <location>
        <position position="85"/>
    </location>
</feature>
<feature type="active site" evidence="1">
    <location>
        <position position="193"/>
    </location>
</feature>
<feature type="active site" evidence="1">
    <location>
        <position position="195"/>
    </location>
</feature>
<keyword id="KW-0067">ATP-binding</keyword>
<keyword id="KW-0963">Cytoplasm</keyword>
<keyword id="KW-0315">Glutamine amidotransferase</keyword>
<keyword id="KW-0378">Hydrolase</keyword>
<keyword id="KW-0436">Ligase</keyword>
<keyword id="KW-0547">Nucleotide-binding</keyword>
<keyword id="KW-0658">Purine biosynthesis</keyword>
<proteinExistence type="inferred from homology"/>
<reference key="1">
    <citation type="journal article" date="2005" name="J. Bacteriol.">
        <title>Insights on evolution of virulence and resistance from the complete genome analysis of an early methicillin-resistant Staphylococcus aureus strain and a biofilm-producing methicillin-resistant Staphylococcus epidermidis strain.</title>
        <authorList>
            <person name="Gill S.R."/>
            <person name="Fouts D.E."/>
            <person name="Archer G.L."/>
            <person name="Mongodin E.F."/>
            <person name="DeBoy R.T."/>
            <person name="Ravel J."/>
            <person name="Paulsen I.T."/>
            <person name="Kolonay J.F."/>
            <person name="Brinkac L.M."/>
            <person name="Beanan M.J."/>
            <person name="Dodson R.J."/>
            <person name="Daugherty S.C."/>
            <person name="Madupu R."/>
            <person name="Angiuoli S.V."/>
            <person name="Durkin A.S."/>
            <person name="Haft D.H."/>
            <person name="Vamathevan J.J."/>
            <person name="Khouri H."/>
            <person name="Utterback T.R."/>
            <person name="Lee C."/>
            <person name="Dimitrov G."/>
            <person name="Jiang L."/>
            <person name="Qin H."/>
            <person name="Weidman J."/>
            <person name="Tran K."/>
            <person name="Kang K.H."/>
            <person name="Hance I.R."/>
            <person name="Nelson K.E."/>
            <person name="Fraser C.M."/>
        </authorList>
    </citation>
    <scope>NUCLEOTIDE SEQUENCE [LARGE SCALE GENOMIC DNA]</scope>
    <source>
        <strain>COL</strain>
    </source>
</reference>
<evidence type="ECO:0000255" key="1">
    <source>
        <dbReference type="HAMAP-Rule" id="MF_00421"/>
    </source>
</evidence>
<comment type="function">
    <text evidence="1">Part of the phosphoribosylformylglycinamidine synthase complex involved in the purines biosynthetic pathway. Catalyzes the ATP-dependent conversion of formylglycinamide ribonucleotide (FGAR) and glutamine to yield formylglycinamidine ribonucleotide (FGAM) and glutamate. The FGAM synthase complex is composed of three subunits. PurQ produces an ammonia molecule by converting glutamine to glutamate. PurL transfers the ammonia molecule to FGAR to form FGAM in an ATP-dependent manner. PurS interacts with PurQ and PurL and is thought to assist in the transfer of the ammonia molecule from PurQ to PurL.</text>
</comment>
<comment type="catalytic activity">
    <reaction evidence="1">
        <text>N(2)-formyl-N(1)-(5-phospho-beta-D-ribosyl)glycinamide + L-glutamine + ATP + H2O = 2-formamido-N(1)-(5-O-phospho-beta-D-ribosyl)acetamidine + L-glutamate + ADP + phosphate + H(+)</text>
        <dbReference type="Rhea" id="RHEA:17129"/>
        <dbReference type="ChEBI" id="CHEBI:15377"/>
        <dbReference type="ChEBI" id="CHEBI:15378"/>
        <dbReference type="ChEBI" id="CHEBI:29985"/>
        <dbReference type="ChEBI" id="CHEBI:30616"/>
        <dbReference type="ChEBI" id="CHEBI:43474"/>
        <dbReference type="ChEBI" id="CHEBI:58359"/>
        <dbReference type="ChEBI" id="CHEBI:147286"/>
        <dbReference type="ChEBI" id="CHEBI:147287"/>
        <dbReference type="ChEBI" id="CHEBI:456216"/>
        <dbReference type="EC" id="6.3.5.3"/>
    </reaction>
</comment>
<comment type="catalytic activity">
    <reaction evidence="1">
        <text>L-glutamine + H2O = L-glutamate + NH4(+)</text>
        <dbReference type="Rhea" id="RHEA:15889"/>
        <dbReference type="ChEBI" id="CHEBI:15377"/>
        <dbReference type="ChEBI" id="CHEBI:28938"/>
        <dbReference type="ChEBI" id="CHEBI:29985"/>
        <dbReference type="ChEBI" id="CHEBI:58359"/>
        <dbReference type="EC" id="3.5.1.2"/>
    </reaction>
</comment>
<comment type="pathway">
    <text evidence="1">Purine metabolism; IMP biosynthesis via de novo pathway; 5-amino-1-(5-phospho-D-ribosyl)imidazole from N(2)-formyl-N(1)-(5-phospho-D-ribosyl)glycinamide: step 1/2.</text>
</comment>
<comment type="subunit">
    <text evidence="1">Part of the FGAM synthase complex composed of 1 PurL, 1 PurQ and 2 PurS subunits.</text>
</comment>
<comment type="subcellular location">
    <subcellularLocation>
        <location evidence="1">Cytoplasm</location>
    </subcellularLocation>
</comment>
<gene>
    <name evidence="1" type="primary">purQ</name>
    <name type="ordered locus">SACOL1077</name>
</gene>
<name>PURQ_STAAC</name>
<accession>Q5HH16</accession>